<feature type="chain" id="PRO_1000084679" description="tRNA pseudouridine synthase B">
    <location>
        <begin position="1"/>
        <end position="317"/>
    </location>
</feature>
<feature type="active site" description="Nucleophile" evidence="1">
    <location>
        <position position="47"/>
    </location>
</feature>
<dbReference type="EC" id="5.4.99.25" evidence="1"/>
<dbReference type="EMBL" id="CP000469">
    <property type="protein sequence ID" value="ABK47267.1"/>
    <property type="molecule type" value="Genomic_DNA"/>
</dbReference>
<dbReference type="RefSeq" id="WP_011716145.1">
    <property type="nucleotide sequence ID" value="NC_008577.1"/>
</dbReference>
<dbReference type="SMR" id="A0KTZ8"/>
<dbReference type="STRING" id="94122.Shewana3_1032"/>
<dbReference type="KEGG" id="shn:Shewana3_1032"/>
<dbReference type="eggNOG" id="COG0130">
    <property type="taxonomic scope" value="Bacteria"/>
</dbReference>
<dbReference type="HOGENOM" id="CLU_032087_0_3_6"/>
<dbReference type="OrthoDB" id="9802309at2"/>
<dbReference type="Proteomes" id="UP000002589">
    <property type="component" value="Chromosome"/>
</dbReference>
<dbReference type="GO" id="GO:0003723">
    <property type="term" value="F:RNA binding"/>
    <property type="evidence" value="ECO:0007669"/>
    <property type="project" value="InterPro"/>
</dbReference>
<dbReference type="GO" id="GO:0160148">
    <property type="term" value="F:tRNA pseudouridine(55) synthase activity"/>
    <property type="evidence" value="ECO:0007669"/>
    <property type="project" value="UniProtKB-EC"/>
</dbReference>
<dbReference type="GO" id="GO:1990481">
    <property type="term" value="P:mRNA pseudouridine synthesis"/>
    <property type="evidence" value="ECO:0007669"/>
    <property type="project" value="TreeGrafter"/>
</dbReference>
<dbReference type="GO" id="GO:0031119">
    <property type="term" value="P:tRNA pseudouridine synthesis"/>
    <property type="evidence" value="ECO:0007669"/>
    <property type="project" value="UniProtKB-UniRule"/>
</dbReference>
<dbReference type="CDD" id="cd02573">
    <property type="entry name" value="PseudoU_synth_EcTruB"/>
    <property type="match status" value="1"/>
</dbReference>
<dbReference type="CDD" id="cd21152">
    <property type="entry name" value="PUA_TruB_bacterial"/>
    <property type="match status" value="1"/>
</dbReference>
<dbReference type="FunFam" id="2.30.130.10:FF:000004">
    <property type="entry name" value="tRNA pseudouridine synthase B"/>
    <property type="match status" value="1"/>
</dbReference>
<dbReference type="FunFam" id="3.30.2350.10:FF:000003">
    <property type="entry name" value="tRNA pseudouridine synthase B"/>
    <property type="match status" value="1"/>
</dbReference>
<dbReference type="Gene3D" id="3.30.2350.10">
    <property type="entry name" value="Pseudouridine synthase"/>
    <property type="match status" value="1"/>
</dbReference>
<dbReference type="Gene3D" id="2.30.130.10">
    <property type="entry name" value="PUA domain"/>
    <property type="match status" value="1"/>
</dbReference>
<dbReference type="HAMAP" id="MF_01080">
    <property type="entry name" value="TruB_bact"/>
    <property type="match status" value="1"/>
</dbReference>
<dbReference type="InterPro" id="IPR020103">
    <property type="entry name" value="PsdUridine_synth_cat_dom_sf"/>
</dbReference>
<dbReference type="InterPro" id="IPR002501">
    <property type="entry name" value="PsdUridine_synth_N"/>
</dbReference>
<dbReference type="InterPro" id="IPR015947">
    <property type="entry name" value="PUA-like_sf"/>
</dbReference>
<dbReference type="InterPro" id="IPR036974">
    <property type="entry name" value="PUA_sf"/>
</dbReference>
<dbReference type="InterPro" id="IPR014780">
    <property type="entry name" value="tRNA_psdUridine_synth_TruB"/>
</dbReference>
<dbReference type="InterPro" id="IPR015240">
    <property type="entry name" value="tRNA_sdUridine_synth_fam1_C"/>
</dbReference>
<dbReference type="InterPro" id="IPR032819">
    <property type="entry name" value="TruB_C"/>
</dbReference>
<dbReference type="NCBIfam" id="TIGR00431">
    <property type="entry name" value="TruB"/>
    <property type="match status" value="1"/>
</dbReference>
<dbReference type="PANTHER" id="PTHR13767:SF2">
    <property type="entry name" value="PSEUDOURIDYLATE SYNTHASE TRUB1"/>
    <property type="match status" value="1"/>
</dbReference>
<dbReference type="PANTHER" id="PTHR13767">
    <property type="entry name" value="TRNA-PSEUDOURIDINE SYNTHASE"/>
    <property type="match status" value="1"/>
</dbReference>
<dbReference type="Pfam" id="PF09157">
    <property type="entry name" value="TruB-C_2"/>
    <property type="match status" value="1"/>
</dbReference>
<dbReference type="Pfam" id="PF16198">
    <property type="entry name" value="TruB_C_2"/>
    <property type="match status" value="1"/>
</dbReference>
<dbReference type="Pfam" id="PF01509">
    <property type="entry name" value="TruB_N"/>
    <property type="match status" value="1"/>
</dbReference>
<dbReference type="SUPFAM" id="SSF55120">
    <property type="entry name" value="Pseudouridine synthase"/>
    <property type="match status" value="1"/>
</dbReference>
<dbReference type="SUPFAM" id="SSF88697">
    <property type="entry name" value="PUA domain-like"/>
    <property type="match status" value="1"/>
</dbReference>
<evidence type="ECO:0000255" key="1">
    <source>
        <dbReference type="HAMAP-Rule" id="MF_01080"/>
    </source>
</evidence>
<proteinExistence type="inferred from homology"/>
<sequence length="317" mass="34944">MARRSKGRFIDGIVLLDKATGMSSNFALQRVKRFFNANKAGHTGALDPLATGMLPVCLGEATKFSQHLLDSDKRYLVTAKLGQRTDTSDSDGEVVQTRPLEFTEAQLMSALEHFRGDTQQVPSMYSALKYQGQPLYKYAREGIEVPREARPITVFELNFIGLEGDELTLDIHCSKGTYIRTIIDDLGEMLGCGAHVIMLRRTQVAHYPYDKMVTLEQLEALVAKAQEEQLDPSSLLDSLLLPMDTAVADFPEVNVPDASAAYLMQGQAVRVSGLVADTLVRITLGTERRFVGIGEMNQDGLLAPKRLVVLHDQAKAS</sequence>
<accession>A0KTZ8</accession>
<organism>
    <name type="scientific">Shewanella sp. (strain ANA-3)</name>
    <dbReference type="NCBI Taxonomy" id="94122"/>
    <lineage>
        <taxon>Bacteria</taxon>
        <taxon>Pseudomonadati</taxon>
        <taxon>Pseudomonadota</taxon>
        <taxon>Gammaproteobacteria</taxon>
        <taxon>Alteromonadales</taxon>
        <taxon>Shewanellaceae</taxon>
        <taxon>Shewanella</taxon>
    </lineage>
</organism>
<comment type="function">
    <text evidence="1">Responsible for synthesis of pseudouridine from uracil-55 in the psi GC loop of transfer RNAs.</text>
</comment>
<comment type="catalytic activity">
    <reaction evidence="1">
        <text>uridine(55) in tRNA = pseudouridine(55) in tRNA</text>
        <dbReference type="Rhea" id="RHEA:42532"/>
        <dbReference type="Rhea" id="RHEA-COMP:10101"/>
        <dbReference type="Rhea" id="RHEA-COMP:10102"/>
        <dbReference type="ChEBI" id="CHEBI:65314"/>
        <dbReference type="ChEBI" id="CHEBI:65315"/>
        <dbReference type="EC" id="5.4.99.25"/>
    </reaction>
</comment>
<comment type="similarity">
    <text evidence="1">Belongs to the pseudouridine synthase TruB family. Type 1 subfamily.</text>
</comment>
<name>TRUB_SHESA</name>
<reference key="1">
    <citation type="submission" date="2006-09" db="EMBL/GenBank/DDBJ databases">
        <title>Complete sequence of chromosome 1 of Shewanella sp. ANA-3.</title>
        <authorList>
            <person name="Copeland A."/>
            <person name="Lucas S."/>
            <person name="Lapidus A."/>
            <person name="Barry K."/>
            <person name="Detter J.C."/>
            <person name="Glavina del Rio T."/>
            <person name="Hammon N."/>
            <person name="Israni S."/>
            <person name="Dalin E."/>
            <person name="Tice H."/>
            <person name="Pitluck S."/>
            <person name="Chertkov O."/>
            <person name="Brettin T."/>
            <person name="Bruce D."/>
            <person name="Han C."/>
            <person name="Tapia R."/>
            <person name="Gilna P."/>
            <person name="Schmutz J."/>
            <person name="Larimer F."/>
            <person name="Land M."/>
            <person name="Hauser L."/>
            <person name="Kyrpides N."/>
            <person name="Kim E."/>
            <person name="Newman D."/>
            <person name="Salticov C."/>
            <person name="Konstantinidis K."/>
            <person name="Klappenback J."/>
            <person name="Tiedje J."/>
            <person name="Richardson P."/>
        </authorList>
    </citation>
    <scope>NUCLEOTIDE SEQUENCE [LARGE SCALE GENOMIC DNA]</scope>
    <source>
        <strain>ANA-3</strain>
    </source>
</reference>
<keyword id="KW-0413">Isomerase</keyword>
<keyword id="KW-0819">tRNA processing</keyword>
<gene>
    <name evidence="1" type="primary">truB</name>
    <name type="ordered locus">Shewana3_1032</name>
</gene>
<protein>
    <recommendedName>
        <fullName evidence="1">tRNA pseudouridine synthase B</fullName>
        <ecNumber evidence="1">5.4.99.25</ecNumber>
    </recommendedName>
    <alternativeName>
        <fullName evidence="1">tRNA pseudouridine(55) synthase</fullName>
        <shortName evidence="1">Psi55 synthase</shortName>
    </alternativeName>
    <alternativeName>
        <fullName evidence="1">tRNA pseudouridylate synthase</fullName>
    </alternativeName>
    <alternativeName>
        <fullName evidence="1">tRNA-uridine isomerase</fullName>
    </alternativeName>
</protein>